<name>RL14_WOLPP</name>
<gene>
    <name evidence="1" type="primary">rplN</name>
    <name type="ordered locus">WP1176</name>
</gene>
<evidence type="ECO:0000255" key="1">
    <source>
        <dbReference type="HAMAP-Rule" id="MF_01367"/>
    </source>
</evidence>
<evidence type="ECO:0000305" key="2"/>
<proteinExistence type="inferred from homology"/>
<organism>
    <name type="scientific">Wolbachia pipientis subsp. Culex pipiens (strain wPip)</name>
    <dbReference type="NCBI Taxonomy" id="570417"/>
    <lineage>
        <taxon>Bacteria</taxon>
        <taxon>Pseudomonadati</taxon>
        <taxon>Pseudomonadota</taxon>
        <taxon>Alphaproteobacteria</taxon>
        <taxon>Rickettsiales</taxon>
        <taxon>Anaplasmataceae</taxon>
        <taxon>Wolbachieae</taxon>
        <taxon>Wolbachia</taxon>
    </lineage>
</organism>
<comment type="function">
    <text evidence="1">Binds to 23S rRNA. Forms part of two intersubunit bridges in the 70S ribosome.</text>
</comment>
<comment type="subunit">
    <text evidence="1">Part of the 50S ribosomal subunit. Forms a cluster with proteins L3 and L19. In the 70S ribosome, L14 and L19 interact and together make contacts with the 16S rRNA in bridges B5 and B8.</text>
</comment>
<comment type="similarity">
    <text evidence="1">Belongs to the universal ribosomal protein uL14 family.</text>
</comment>
<protein>
    <recommendedName>
        <fullName evidence="1">Large ribosomal subunit protein uL14</fullName>
    </recommendedName>
    <alternativeName>
        <fullName evidence="2">50S ribosomal protein L14</fullName>
    </alternativeName>
</protein>
<sequence>MIQKNTLLEVADNSGARAVLCIGLLGGRKSASVGDTIIISTKSINPKGKVEKGKVYKAVVVRVKNSVKKSDGSVIRFSSNAVVLINDQGEPLGTRVFGPVKKLLSGSFMKIMSLADEVL</sequence>
<reference key="1">
    <citation type="journal article" date="2008" name="Mol. Biol. Evol.">
        <title>Genome evolution of Wolbachia strain wPip from the Culex pipiens group.</title>
        <authorList>
            <person name="Klasson L."/>
            <person name="Walker T."/>
            <person name="Sebaihia M."/>
            <person name="Sanders M.J."/>
            <person name="Quail M.A."/>
            <person name="Lord A."/>
            <person name="Sanders S."/>
            <person name="Earl J."/>
            <person name="O'Neill S.L."/>
            <person name="Thomson N."/>
            <person name="Sinkins S.P."/>
            <person name="Parkhill J."/>
        </authorList>
    </citation>
    <scope>NUCLEOTIDE SEQUENCE [LARGE SCALE GENOMIC DNA]</scope>
    <source>
        <strain>wPip</strain>
    </source>
</reference>
<dbReference type="EMBL" id="AM999887">
    <property type="protein sequence ID" value="CAQ55284.1"/>
    <property type="molecule type" value="Genomic_DNA"/>
</dbReference>
<dbReference type="RefSeq" id="WP_007302542.1">
    <property type="nucleotide sequence ID" value="NC_010981.1"/>
</dbReference>
<dbReference type="SMR" id="B3CN36"/>
<dbReference type="KEGG" id="wpi:WP1176"/>
<dbReference type="eggNOG" id="COG0093">
    <property type="taxonomic scope" value="Bacteria"/>
</dbReference>
<dbReference type="HOGENOM" id="CLU_095071_2_2_5"/>
<dbReference type="Proteomes" id="UP000008814">
    <property type="component" value="Chromosome"/>
</dbReference>
<dbReference type="GO" id="GO:0022625">
    <property type="term" value="C:cytosolic large ribosomal subunit"/>
    <property type="evidence" value="ECO:0007669"/>
    <property type="project" value="TreeGrafter"/>
</dbReference>
<dbReference type="GO" id="GO:0070180">
    <property type="term" value="F:large ribosomal subunit rRNA binding"/>
    <property type="evidence" value="ECO:0007669"/>
    <property type="project" value="TreeGrafter"/>
</dbReference>
<dbReference type="GO" id="GO:0003735">
    <property type="term" value="F:structural constituent of ribosome"/>
    <property type="evidence" value="ECO:0007669"/>
    <property type="project" value="InterPro"/>
</dbReference>
<dbReference type="GO" id="GO:0006412">
    <property type="term" value="P:translation"/>
    <property type="evidence" value="ECO:0007669"/>
    <property type="project" value="UniProtKB-UniRule"/>
</dbReference>
<dbReference type="CDD" id="cd00337">
    <property type="entry name" value="Ribosomal_uL14"/>
    <property type="match status" value="1"/>
</dbReference>
<dbReference type="Gene3D" id="2.40.150.20">
    <property type="entry name" value="Ribosomal protein L14"/>
    <property type="match status" value="1"/>
</dbReference>
<dbReference type="HAMAP" id="MF_01367">
    <property type="entry name" value="Ribosomal_uL14"/>
    <property type="match status" value="1"/>
</dbReference>
<dbReference type="InterPro" id="IPR000218">
    <property type="entry name" value="Ribosomal_uL14"/>
</dbReference>
<dbReference type="InterPro" id="IPR005745">
    <property type="entry name" value="Ribosomal_uL14_bac-type"/>
</dbReference>
<dbReference type="InterPro" id="IPR019972">
    <property type="entry name" value="Ribosomal_uL14_CS"/>
</dbReference>
<dbReference type="InterPro" id="IPR036853">
    <property type="entry name" value="Ribosomal_uL14_sf"/>
</dbReference>
<dbReference type="NCBIfam" id="TIGR01067">
    <property type="entry name" value="rplN_bact"/>
    <property type="match status" value="1"/>
</dbReference>
<dbReference type="PANTHER" id="PTHR11761">
    <property type="entry name" value="50S/60S RIBOSOMAL PROTEIN L14/L23"/>
    <property type="match status" value="1"/>
</dbReference>
<dbReference type="PANTHER" id="PTHR11761:SF3">
    <property type="entry name" value="LARGE RIBOSOMAL SUBUNIT PROTEIN UL14M"/>
    <property type="match status" value="1"/>
</dbReference>
<dbReference type="Pfam" id="PF00238">
    <property type="entry name" value="Ribosomal_L14"/>
    <property type="match status" value="1"/>
</dbReference>
<dbReference type="SMART" id="SM01374">
    <property type="entry name" value="Ribosomal_L14"/>
    <property type="match status" value="1"/>
</dbReference>
<dbReference type="SUPFAM" id="SSF50193">
    <property type="entry name" value="Ribosomal protein L14"/>
    <property type="match status" value="1"/>
</dbReference>
<dbReference type="PROSITE" id="PS00049">
    <property type="entry name" value="RIBOSOMAL_L14"/>
    <property type="match status" value="1"/>
</dbReference>
<feature type="chain" id="PRO_0000355840" description="Large ribosomal subunit protein uL14">
    <location>
        <begin position="1"/>
        <end position="119"/>
    </location>
</feature>
<keyword id="KW-0687">Ribonucleoprotein</keyword>
<keyword id="KW-0689">Ribosomal protein</keyword>
<keyword id="KW-0694">RNA-binding</keyword>
<keyword id="KW-0699">rRNA-binding</keyword>
<accession>B3CN36</accession>